<feature type="chain" id="PRO_0000334029" description="Cell division protein SepF">
    <location>
        <begin position="1"/>
        <end position="196"/>
    </location>
</feature>
<feature type="region of interest" description="Disordered" evidence="2">
    <location>
        <begin position="16"/>
        <end position="81"/>
    </location>
</feature>
<feature type="compositionally biased region" description="Polar residues" evidence="2">
    <location>
        <begin position="56"/>
        <end position="69"/>
    </location>
</feature>
<evidence type="ECO:0000255" key="1">
    <source>
        <dbReference type="HAMAP-Rule" id="MF_01197"/>
    </source>
</evidence>
<evidence type="ECO:0000256" key="2">
    <source>
        <dbReference type="SAM" id="MobiDB-lite"/>
    </source>
</evidence>
<gene>
    <name evidence="1" type="primary">sepF</name>
    <name type="ordered locus">LL1867</name>
    <name type="ORF">L119731</name>
</gene>
<reference key="1">
    <citation type="journal article" date="2001" name="Genome Res.">
        <title>The complete genome sequence of the lactic acid bacterium Lactococcus lactis ssp. lactis IL1403.</title>
        <authorList>
            <person name="Bolotin A."/>
            <person name="Wincker P."/>
            <person name="Mauger S."/>
            <person name="Jaillon O."/>
            <person name="Malarme K."/>
            <person name="Weissenbach J."/>
            <person name="Ehrlich S.D."/>
            <person name="Sorokin A."/>
        </authorList>
    </citation>
    <scope>NUCLEOTIDE SEQUENCE [LARGE SCALE GENOMIC DNA]</scope>
    <source>
        <strain>IL1403</strain>
    </source>
</reference>
<protein>
    <recommendedName>
        <fullName evidence="1">Cell division protein SepF</fullName>
    </recommendedName>
</protein>
<dbReference type="EMBL" id="AE005176">
    <property type="protein sequence ID" value="AAK05965.1"/>
    <property type="molecule type" value="Genomic_DNA"/>
</dbReference>
<dbReference type="PIR" id="C86858">
    <property type="entry name" value="C86858"/>
</dbReference>
<dbReference type="RefSeq" id="NP_268024.1">
    <property type="nucleotide sequence ID" value="NC_002662.1"/>
</dbReference>
<dbReference type="RefSeq" id="WP_003132390.1">
    <property type="nucleotide sequence ID" value="NC_002662.1"/>
</dbReference>
<dbReference type="SMR" id="Q9CEH4"/>
<dbReference type="PaxDb" id="272623-L119731"/>
<dbReference type="DNASU" id="1115532"/>
<dbReference type="EnsemblBacteria" id="AAK05965">
    <property type="protein sequence ID" value="AAK05965"/>
    <property type="gene ID" value="L119731"/>
</dbReference>
<dbReference type="KEGG" id="lla:L119731"/>
<dbReference type="PATRIC" id="fig|272623.7.peg.2001"/>
<dbReference type="eggNOG" id="COG1799">
    <property type="taxonomic scope" value="Bacteria"/>
</dbReference>
<dbReference type="HOGENOM" id="CLU_078499_2_0_9"/>
<dbReference type="OrthoDB" id="9815206at2"/>
<dbReference type="Proteomes" id="UP000002196">
    <property type="component" value="Chromosome"/>
</dbReference>
<dbReference type="GO" id="GO:0005737">
    <property type="term" value="C:cytoplasm"/>
    <property type="evidence" value="ECO:0007669"/>
    <property type="project" value="UniProtKB-SubCell"/>
</dbReference>
<dbReference type="GO" id="GO:0000917">
    <property type="term" value="P:division septum assembly"/>
    <property type="evidence" value="ECO:0007669"/>
    <property type="project" value="UniProtKB-KW"/>
</dbReference>
<dbReference type="GO" id="GO:0043093">
    <property type="term" value="P:FtsZ-dependent cytokinesis"/>
    <property type="evidence" value="ECO:0007669"/>
    <property type="project" value="UniProtKB-UniRule"/>
</dbReference>
<dbReference type="Gene3D" id="3.30.110.150">
    <property type="entry name" value="SepF-like protein"/>
    <property type="match status" value="1"/>
</dbReference>
<dbReference type="HAMAP" id="MF_01197">
    <property type="entry name" value="SepF"/>
    <property type="match status" value="1"/>
</dbReference>
<dbReference type="InterPro" id="IPR023052">
    <property type="entry name" value="Cell_div_SepF"/>
</dbReference>
<dbReference type="InterPro" id="IPR007561">
    <property type="entry name" value="Cell_div_SepF/SepF-rel"/>
</dbReference>
<dbReference type="InterPro" id="IPR038594">
    <property type="entry name" value="SepF-like_sf"/>
</dbReference>
<dbReference type="PANTHER" id="PTHR35798">
    <property type="entry name" value="CELL DIVISION PROTEIN SEPF"/>
    <property type="match status" value="1"/>
</dbReference>
<dbReference type="PANTHER" id="PTHR35798:SF1">
    <property type="entry name" value="CELL DIVISION PROTEIN SEPF"/>
    <property type="match status" value="1"/>
</dbReference>
<dbReference type="Pfam" id="PF04472">
    <property type="entry name" value="SepF"/>
    <property type="match status" value="1"/>
</dbReference>
<organism>
    <name type="scientific">Lactococcus lactis subsp. lactis (strain IL1403)</name>
    <name type="common">Streptococcus lactis</name>
    <dbReference type="NCBI Taxonomy" id="272623"/>
    <lineage>
        <taxon>Bacteria</taxon>
        <taxon>Bacillati</taxon>
        <taxon>Bacillota</taxon>
        <taxon>Bacilli</taxon>
        <taxon>Lactobacillales</taxon>
        <taxon>Streptococcaceae</taxon>
        <taxon>Lactococcus</taxon>
    </lineage>
</organism>
<accession>Q9CEH4</accession>
<name>SEPF_LACLA</name>
<keyword id="KW-0131">Cell cycle</keyword>
<keyword id="KW-0132">Cell division</keyword>
<keyword id="KW-0963">Cytoplasm</keyword>
<keyword id="KW-1185">Reference proteome</keyword>
<keyword id="KW-0717">Septation</keyword>
<comment type="function">
    <text evidence="1">Cell division protein that is part of the divisome complex and is recruited early to the Z-ring. Probably stimulates Z-ring formation, perhaps through the cross-linking of FtsZ protofilaments. Its function overlaps with FtsA.</text>
</comment>
<comment type="subunit">
    <text evidence="1">Homodimer. Interacts with FtsZ.</text>
</comment>
<comment type="subcellular location">
    <subcellularLocation>
        <location evidence="1">Cytoplasm</location>
    </subcellularLocation>
    <text evidence="1">Localizes to the division site, in a FtsZ-dependent manner.</text>
</comment>
<comment type="similarity">
    <text evidence="1">Belongs to the SepF family.</text>
</comment>
<proteinExistence type="inferred from homology"/>
<sequence length="196" mass="21870">MAFKDWMNNLRDYFVEDDEEFNEPARPVQESRPTVASTPKPKVEERKAQPEYQTRRPAQSTSKAQTQTAAPKRAGSTFTKPMPEKIVQQQTVSQSQSVAATVSTIAIKEPRAYADIMESARIVKNGECVLVNFKFMGDAQARRSIDFMTGVVFTLDGDIQNVGGQIFLMTPANITVDAAKEMSILAGQNFESYDIY</sequence>